<name>ATPA_ECOL5</name>
<comment type="function">
    <text evidence="1">Produces ATP from ADP in the presence of a proton gradient across the membrane. The alpha chain is a regulatory subunit.</text>
</comment>
<comment type="catalytic activity">
    <reaction evidence="1">
        <text>ATP + H2O + 4 H(+)(in) = ADP + phosphate + 5 H(+)(out)</text>
        <dbReference type="Rhea" id="RHEA:57720"/>
        <dbReference type="ChEBI" id="CHEBI:15377"/>
        <dbReference type="ChEBI" id="CHEBI:15378"/>
        <dbReference type="ChEBI" id="CHEBI:30616"/>
        <dbReference type="ChEBI" id="CHEBI:43474"/>
        <dbReference type="ChEBI" id="CHEBI:456216"/>
        <dbReference type="EC" id="7.1.2.2"/>
    </reaction>
</comment>
<comment type="subunit">
    <text evidence="1">F-type ATPases have 2 components, CF(1) - the catalytic core - and CF(0) - the membrane proton channel. CF(1) has five subunits: alpha(3), beta(3), gamma(1), delta(1), epsilon(1). CF(0) has three main subunits: a(1), b(2) and c(9-12). The alpha and beta chains form an alternating ring which encloses part of the gamma chain. CF(1) is attached to CF(0) by a central stalk formed by the gamma and epsilon chains, while a peripheral stalk is formed by the delta and b chains.</text>
</comment>
<comment type="subcellular location">
    <subcellularLocation>
        <location evidence="1">Cell inner membrane</location>
        <topology evidence="1">Peripheral membrane protein</topology>
    </subcellularLocation>
</comment>
<comment type="similarity">
    <text evidence="1">Belongs to the ATPase alpha/beta chains family.</text>
</comment>
<organism>
    <name type="scientific">Escherichia coli O6:K15:H31 (strain 536 / UPEC)</name>
    <dbReference type="NCBI Taxonomy" id="362663"/>
    <lineage>
        <taxon>Bacteria</taxon>
        <taxon>Pseudomonadati</taxon>
        <taxon>Pseudomonadota</taxon>
        <taxon>Gammaproteobacteria</taxon>
        <taxon>Enterobacterales</taxon>
        <taxon>Enterobacteriaceae</taxon>
        <taxon>Escherichia</taxon>
    </lineage>
</organism>
<keyword id="KW-0066">ATP synthesis</keyword>
<keyword id="KW-0067">ATP-binding</keyword>
<keyword id="KW-0997">Cell inner membrane</keyword>
<keyword id="KW-1003">Cell membrane</keyword>
<keyword id="KW-0139">CF(1)</keyword>
<keyword id="KW-0375">Hydrogen ion transport</keyword>
<keyword id="KW-0406">Ion transport</keyword>
<keyword id="KW-0472">Membrane</keyword>
<keyword id="KW-0547">Nucleotide-binding</keyword>
<keyword id="KW-1278">Translocase</keyword>
<keyword id="KW-0813">Transport</keyword>
<evidence type="ECO:0000255" key="1">
    <source>
        <dbReference type="HAMAP-Rule" id="MF_01346"/>
    </source>
</evidence>
<protein>
    <recommendedName>
        <fullName evidence="1">ATP synthase subunit alpha</fullName>
        <ecNumber evidence="1">7.1.2.2</ecNumber>
    </recommendedName>
    <alternativeName>
        <fullName evidence="1">ATP synthase F1 sector subunit alpha</fullName>
    </alternativeName>
    <alternativeName>
        <fullName evidence="1">F-ATPase subunit alpha</fullName>
    </alternativeName>
</protein>
<dbReference type="EC" id="7.1.2.2" evidence="1"/>
<dbReference type="EMBL" id="CP000247">
    <property type="protein sequence ID" value="ABG71904.1"/>
    <property type="molecule type" value="Genomic_DNA"/>
</dbReference>
<dbReference type="RefSeq" id="WP_001176745.1">
    <property type="nucleotide sequence ID" value="NC_008253.1"/>
</dbReference>
<dbReference type="SMR" id="Q0TAX5"/>
<dbReference type="GeneID" id="93778233"/>
<dbReference type="KEGG" id="ecp:ECP_3933"/>
<dbReference type="HOGENOM" id="CLU_010091_2_1_6"/>
<dbReference type="Proteomes" id="UP000009182">
    <property type="component" value="Chromosome"/>
</dbReference>
<dbReference type="GO" id="GO:0005886">
    <property type="term" value="C:plasma membrane"/>
    <property type="evidence" value="ECO:0007669"/>
    <property type="project" value="UniProtKB-SubCell"/>
</dbReference>
<dbReference type="GO" id="GO:0045259">
    <property type="term" value="C:proton-transporting ATP synthase complex"/>
    <property type="evidence" value="ECO:0007669"/>
    <property type="project" value="UniProtKB-KW"/>
</dbReference>
<dbReference type="GO" id="GO:0043531">
    <property type="term" value="F:ADP binding"/>
    <property type="evidence" value="ECO:0007669"/>
    <property type="project" value="TreeGrafter"/>
</dbReference>
<dbReference type="GO" id="GO:0005524">
    <property type="term" value="F:ATP binding"/>
    <property type="evidence" value="ECO:0007669"/>
    <property type="project" value="UniProtKB-UniRule"/>
</dbReference>
<dbReference type="GO" id="GO:0046933">
    <property type="term" value="F:proton-transporting ATP synthase activity, rotational mechanism"/>
    <property type="evidence" value="ECO:0007669"/>
    <property type="project" value="UniProtKB-UniRule"/>
</dbReference>
<dbReference type="CDD" id="cd18113">
    <property type="entry name" value="ATP-synt_F1_alpha_C"/>
    <property type="match status" value="1"/>
</dbReference>
<dbReference type="CDD" id="cd18116">
    <property type="entry name" value="ATP-synt_F1_alpha_N"/>
    <property type="match status" value="1"/>
</dbReference>
<dbReference type="CDD" id="cd01132">
    <property type="entry name" value="F1-ATPase_alpha_CD"/>
    <property type="match status" value="1"/>
</dbReference>
<dbReference type="FunFam" id="1.20.150.20:FF:000001">
    <property type="entry name" value="ATP synthase subunit alpha"/>
    <property type="match status" value="1"/>
</dbReference>
<dbReference type="FunFam" id="2.40.30.20:FF:000001">
    <property type="entry name" value="ATP synthase subunit alpha"/>
    <property type="match status" value="1"/>
</dbReference>
<dbReference type="FunFam" id="3.40.50.300:FF:000002">
    <property type="entry name" value="ATP synthase subunit alpha"/>
    <property type="match status" value="1"/>
</dbReference>
<dbReference type="Gene3D" id="2.40.30.20">
    <property type="match status" value="1"/>
</dbReference>
<dbReference type="Gene3D" id="1.20.150.20">
    <property type="entry name" value="ATP synthase alpha/beta chain, C-terminal domain"/>
    <property type="match status" value="1"/>
</dbReference>
<dbReference type="Gene3D" id="3.40.50.300">
    <property type="entry name" value="P-loop containing nucleotide triphosphate hydrolases"/>
    <property type="match status" value="1"/>
</dbReference>
<dbReference type="HAMAP" id="MF_01346">
    <property type="entry name" value="ATP_synth_alpha_bact"/>
    <property type="match status" value="1"/>
</dbReference>
<dbReference type="InterPro" id="IPR023366">
    <property type="entry name" value="ATP_synth_asu-like_sf"/>
</dbReference>
<dbReference type="InterPro" id="IPR000793">
    <property type="entry name" value="ATP_synth_asu_C"/>
</dbReference>
<dbReference type="InterPro" id="IPR038376">
    <property type="entry name" value="ATP_synth_asu_C_sf"/>
</dbReference>
<dbReference type="InterPro" id="IPR033732">
    <property type="entry name" value="ATP_synth_F1_a_nt-bd_dom"/>
</dbReference>
<dbReference type="InterPro" id="IPR005294">
    <property type="entry name" value="ATP_synth_F1_asu"/>
</dbReference>
<dbReference type="InterPro" id="IPR020003">
    <property type="entry name" value="ATPase_a/bsu_AS"/>
</dbReference>
<dbReference type="InterPro" id="IPR004100">
    <property type="entry name" value="ATPase_F1/V1/A1_a/bsu_N"/>
</dbReference>
<dbReference type="InterPro" id="IPR036121">
    <property type="entry name" value="ATPase_F1/V1/A1_a/bsu_N_sf"/>
</dbReference>
<dbReference type="InterPro" id="IPR000194">
    <property type="entry name" value="ATPase_F1/V1/A1_a/bsu_nucl-bd"/>
</dbReference>
<dbReference type="InterPro" id="IPR027417">
    <property type="entry name" value="P-loop_NTPase"/>
</dbReference>
<dbReference type="NCBIfam" id="TIGR00962">
    <property type="entry name" value="atpA"/>
    <property type="match status" value="1"/>
</dbReference>
<dbReference type="NCBIfam" id="NF009884">
    <property type="entry name" value="PRK13343.1"/>
    <property type="match status" value="1"/>
</dbReference>
<dbReference type="PANTHER" id="PTHR48082">
    <property type="entry name" value="ATP SYNTHASE SUBUNIT ALPHA, MITOCHONDRIAL"/>
    <property type="match status" value="1"/>
</dbReference>
<dbReference type="PANTHER" id="PTHR48082:SF2">
    <property type="entry name" value="ATP SYNTHASE SUBUNIT ALPHA, MITOCHONDRIAL"/>
    <property type="match status" value="1"/>
</dbReference>
<dbReference type="Pfam" id="PF00006">
    <property type="entry name" value="ATP-synt_ab"/>
    <property type="match status" value="1"/>
</dbReference>
<dbReference type="Pfam" id="PF00306">
    <property type="entry name" value="ATP-synt_ab_C"/>
    <property type="match status" value="1"/>
</dbReference>
<dbReference type="Pfam" id="PF02874">
    <property type="entry name" value="ATP-synt_ab_N"/>
    <property type="match status" value="1"/>
</dbReference>
<dbReference type="SUPFAM" id="SSF47917">
    <property type="entry name" value="C-terminal domain of alpha and beta subunits of F1 ATP synthase"/>
    <property type="match status" value="1"/>
</dbReference>
<dbReference type="SUPFAM" id="SSF50615">
    <property type="entry name" value="N-terminal domain of alpha and beta subunits of F1 ATP synthase"/>
    <property type="match status" value="1"/>
</dbReference>
<dbReference type="SUPFAM" id="SSF52540">
    <property type="entry name" value="P-loop containing nucleoside triphosphate hydrolases"/>
    <property type="match status" value="1"/>
</dbReference>
<dbReference type="PROSITE" id="PS00152">
    <property type="entry name" value="ATPASE_ALPHA_BETA"/>
    <property type="match status" value="1"/>
</dbReference>
<feature type="chain" id="PRO_0000256089" description="ATP synthase subunit alpha">
    <location>
        <begin position="1"/>
        <end position="513"/>
    </location>
</feature>
<feature type="binding site" evidence="1">
    <location>
        <begin position="169"/>
        <end position="176"/>
    </location>
    <ligand>
        <name>ATP</name>
        <dbReference type="ChEBI" id="CHEBI:30616"/>
    </ligand>
</feature>
<feature type="site" description="Required for activity" evidence="1">
    <location>
        <position position="373"/>
    </location>
</feature>
<proteinExistence type="inferred from homology"/>
<reference key="1">
    <citation type="journal article" date="2006" name="Mol. Microbiol.">
        <title>Role of pathogenicity island-associated integrases in the genome plasticity of uropathogenic Escherichia coli strain 536.</title>
        <authorList>
            <person name="Hochhut B."/>
            <person name="Wilde C."/>
            <person name="Balling G."/>
            <person name="Middendorf B."/>
            <person name="Dobrindt U."/>
            <person name="Brzuszkiewicz E."/>
            <person name="Gottschalk G."/>
            <person name="Carniel E."/>
            <person name="Hacker J."/>
        </authorList>
    </citation>
    <scope>NUCLEOTIDE SEQUENCE [LARGE SCALE GENOMIC DNA]</scope>
    <source>
        <strain>536 / UPEC</strain>
    </source>
</reference>
<accession>Q0TAX5</accession>
<gene>
    <name evidence="1" type="primary">atpA</name>
    <name type="ordered locus">ECP_3933</name>
</gene>
<sequence>MQLNSTEISELIKQRIAQFNVVSEAHNEGTIVSVSDGVIRIHGLADCMQGEMISLPGNRYAIALNLERDSVGAVVMGPYADLAEGMKVKCTGRILEVPVGRGLLGRVVNTLGAPIDGKGPLDHDGFSAVEAIAPGVIERQSVDQPVQTGYKAVDSMIPIGRGQRELIIGDRQTGKTALAIDAIINQRDSGIKCIYVAIGQKASTISNVVRKLEEHGALANTIVVVATASESAALQYLAPYAGCAMGEYFRDRGEDALIIYDDLSKQAVAYRQISLLLRRPPGREAFPGDVFYLHSRLLERAARVNAEYVEAFTKGEVKGKTGSLTALPIIETQAGDVSAFVPTNVISITDGQIFLETNLFNAGIRPAVNPGISVSRVGGAAQTKIMKKLSGGIRTALAQYRELAAFSQFASDLDDATRKQLDHGQKVTELLKQKQYAPMSVAQQSLVLFAAERGYLADVELSKIGSFEAALLAYVDRDHAPLMQEINQTGGYNDEIEGKLKGILDSFKATQSW</sequence>